<sequence length="140" mass="14775">MSKRGRGGASGAKFRISLGLPVGAVMNCADNTGAKNLFVIAVSGIKGRLNRLPSAGVGDMFVASVKKGKPELRKKVLQAVVVRQRKQYRRIDGSSIYFEDNAGVIVNNKGEMKGSAITGPVTKECADLWPRIASNAGSIA</sequence>
<protein>
    <recommendedName>
        <fullName evidence="1">Large ribosomal subunit protein uL14</fullName>
    </recommendedName>
    <alternativeName>
        <fullName>60S ribosomal protein L23</fullName>
    </alternativeName>
</protein>
<feature type="chain" id="PRO_0000128619" description="Large ribosomal subunit protein uL14">
    <location>
        <begin position="1"/>
        <end position="140"/>
    </location>
</feature>
<comment type="similarity">
    <text evidence="1">Belongs to the universal ribosomal protein uL14 family.</text>
</comment>
<accession>Q93140</accession>
<reference key="1">
    <citation type="submission" date="1996-08" db="EMBL/GenBank/DDBJ databases">
        <authorList>
            <person name="Liu L.X."/>
        </authorList>
    </citation>
    <scope>NUCLEOTIDE SEQUENCE [MRNA]</scope>
</reference>
<evidence type="ECO:0000305" key="1"/>
<organism>
    <name type="scientific">Brugia malayi</name>
    <name type="common">Filarial nematode worm</name>
    <dbReference type="NCBI Taxonomy" id="6279"/>
    <lineage>
        <taxon>Eukaryota</taxon>
        <taxon>Metazoa</taxon>
        <taxon>Ecdysozoa</taxon>
        <taxon>Nematoda</taxon>
        <taxon>Chromadorea</taxon>
        <taxon>Rhabditida</taxon>
        <taxon>Spirurina</taxon>
        <taxon>Spiruromorpha</taxon>
        <taxon>Filarioidea</taxon>
        <taxon>Onchocercidae</taxon>
        <taxon>Brugia</taxon>
    </lineage>
</organism>
<keyword id="KW-1185">Reference proteome</keyword>
<keyword id="KW-0687">Ribonucleoprotein</keyword>
<keyword id="KW-0689">Ribosomal protein</keyword>
<dbReference type="EMBL" id="U66218">
    <property type="protein sequence ID" value="AAB07464.1"/>
    <property type="molecule type" value="mRNA"/>
</dbReference>
<dbReference type="SMR" id="Q93140"/>
<dbReference type="STRING" id="6279.Q93140"/>
<dbReference type="InParanoid" id="Q93140"/>
<dbReference type="Proteomes" id="UP000006672">
    <property type="component" value="Unassembled WGS sequence"/>
</dbReference>
<dbReference type="GO" id="GO:0022625">
    <property type="term" value="C:cytosolic large ribosomal subunit"/>
    <property type="evidence" value="ECO:0007669"/>
    <property type="project" value="TreeGrafter"/>
</dbReference>
<dbReference type="GO" id="GO:0070180">
    <property type="term" value="F:large ribosomal subunit rRNA binding"/>
    <property type="evidence" value="ECO:0007669"/>
    <property type="project" value="TreeGrafter"/>
</dbReference>
<dbReference type="GO" id="GO:0003735">
    <property type="term" value="F:structural constituent of ribosome"/>
    <property type="evidence" value="ECO:0007669"/>
    <property type="project" value="InterPro"/>
</dbReference>
<dbReference type="GO" id="GO:0006412">
    <property type="term" value="P:translation"/>
    <property type="evidence" value="ECO:0007669"/>
    <property type="project" value="InterPro"/>
</dbReference>
<dbReference type="CDD" id="cd00337">
    <property type="entry name" value="Ribosomal_uL14"/>
    <property type="match status" value="1"/>
</dbReference>
<dbReference type="FunFam" id="2.40.150.20:FF:000003">
    <property type="entry name" value="60S ribosomal protein L23"/>
    <property type="match status" value="1"/>
</dbReference>
<dbReference type="Gene3D" id="2.40.150.20">
    <property type="entry name" value="Ribosomal protein L14"/>
    <property type="match status" value="1"/>
</dbReference>
<dbReference type="HAMAP" id="MF_01367">
    <property type="entry name" value="Ribosomal_uL14"/>
    <property type="match status" value="1"/>
</dbReference>
<dbReference type="InterPro" id="IPR000218">
    <property type="entry name" value="Ribosomal_uL14"/>
</dbReference>
<dbReference type="InterPro" id="IPR019972">
    <property type="entry name" value="Ribosomal_uL14_CS"/>
</dbReference>
<dbReference type="InterPro" id="IPR036853">
    <property type="entry name" value="Ribosomal_uL14_sf"/>
</dbReference>
<dbReference type="NCBIfam" id="NF006344">
    <property type="entry name" value="PRK08571.1"/>
    <property type="match status" value="1"/>
</dbReference>
<dbReference type="PANTHER" id="PTHR11761">
    <property type="entry name" value="50S/60S RIBOSOMAL PROTEIN L14/L23"/>
    <property type="match status" value="1"/>
</dbReference>
<dbReference type="PANTHER" id="PTHR11761:SF8">
    <property type="entry name" value="LARGE RIBOSOMAL SUBUNIT PROTEIN UL14"/>
    <property type="match status" value="1"/>
</dbReference>
<dbReference type="Pfam" id="PF00238">
    <property type="entry name" value="Ribosomal_L14"/>
    <property type="match status" value="1"/>
</dbReference>
<dbReference type="SMART" id="SM01374">
    <property type="entry name" value="Ribosomal_L14"/>
    <property type="match status" value="1"/>
</dbReference>
<dbReference type="SUPFAM" id="SSF50193">
    <property type="entry name" value="Ribosomal protein L14"/>
    <property type="match status" value="1"/>
</dbReference>
<dbReference type="PROSITE" id="PS00049">
    <property type="entry name" value="RIBOSOMAL_L14"/>
    <property type="match status" value="1"/>
</dbReference>
<name>RL23_BRUMA</name>
<proteinExistence type="evidence at transcript level"/>
<gene>
    <name type="primary">RPL23</name>
</gene>